<organism>
    <name type="scientific">Schizosaccharomyces pombe (strain 972 / ATCC 24843)</name>
    <name type="common">Fission yeast</name>
    <dbReference type="NCBI Taxonomy" id="284812"/>
    <lineage>
        <taxon>Eukaryota</taxon>
        <taxon>Fungi</taxon>
        <taxon>Dikarya</taxon>
        <taxon>Ascomycota</taxon>
        <taxon>Taphrinomycotina</taxon>
        <taxon>Schizosaccharomycetes</taxon>
        <taxon>Schizosaccharomycetales</taxon>
        <taxon>Schizosaccharomycetaceae</taxon>
        <taxon>Schizosaccharomyces</taxon>
    </lineage>
</organism>
<dbReference type="EMBL" id="CU329670">
    <property type="protein sequence ID" value="CAC19759.2"/>
    <property type="molecule type" value="Genomic_DNA"/>
</dbReference>
<dbReference type="RefSeq" id="NP_594050.2">
    <property type="nucleotide sequence ID" value="NM_001019474.2"/>
</dbReference>
<dbReference type="BioGRID" id="279027">
    <property type="interactions" value="59"/>
</dbReference>
<dbReference type="FunCoup" id="Q9HE02">
    <property type="interactions" value="22"/>
</dbReference>
<dbReference type="IntAct" id="Q9HE02">
    <property type="interactions" value="1"/>
</dbReference>
<dbReference type="STRING" id="284812.Q9HE02"/>
<dbReference type="PaxDb" id="4896-SPAC589.02c.1"/>
<dbReference type="EnsemblFungi" id="SPAC589.02c.1">
    <property type="protein sequence ID" value="SPAC589.02c.1:pep"/>
    <property type="gene ID" value="SPAC589.02c"/>
</dbReference>
<dbReference type="GeneID" id="2542571"/>
<dbReference type="KEGG" id="spo:2542571"/>
<dbReference type="PomBase" id="SPAC589.02c"/>
<dbReference type="VEuPathDB" id="FungiDB:SPAC589.02c"/>
<dbReference type="HOGENOM" id="CLU_279001_0_0_1"/>
<dbReference type="InParanoid" id="Q9HE02"/>
<dbReference type="OMA" id="GGKYWCP"/>
<dbReference type="PRO" id="PR:Q9HE02"/>
<dbReference type="Proteomes" id="UP000002485">
    <property type="component" value="Chromosome I"/>
</dbReference>
<dbReference type="GO" id="GO:0016592">
    <property type="term" value="C:mediator complex"/>
    <property type="evidence" value="ECO:0000353"/>
    <property type="project" value="PomBase"/>
</dbReference>
<dbReference type="GO" id="GO:0005634">
    <property type="term" value="C:nucleus"/>
    <property type="evidence" value="ECO:0007005"/>
    <property type="project" value="PomBase"/>
</dbReference>
<dbReference type="GO" id="GO:0003713">
    <property type="term" value="F:transcription coactivator activity"/>
    <property type="evidence" value="ECO:0000318"/>
    <property type="project" value="GO_Central"/>
</dbReference>
<dbReference type="GO" id="GO:0022408">
    <property type="term" value="P:negative regulation of cell-cell adhesion"/>
    <property type="evidence" value="ECO:0000315"/>
    <property type="project" value="PomBase"/>
</dbReference>
<dbReference type="GO" id="GO:0045944">
    <property type="term" value="P:positive regulation of transcription by RNA polymerase II"/>
    <property type="evidence" value="ECO:0000318"/>
    <property type="project" value="GO_Central"/>
</dbReference>
<dbReference type="InterPro" id="IPR009401">
    <property type="entry name" value="Med13_C"/>
</dbReference>
<dbReference type="InterPro" id="IPR051139">
    <property type="entry name" value="Mediator_complx_sub13"/>
</dbReference>
<dbReference type="InterPro" id="IPR041285">
    <property type="entry name" value="MID_MedPIWI"/>
</dbReference>
<dbReference type="PANTHER" id="PTHR48249">
    <property type="entry name" value="MEDIATOR OF RNA POLYMERASE II TRANSCRIPTION SUBUNIT 13"/>
    <property type="match status" value="1"/>
</dbReference>
<dbReference type="PANTHER" id="PTHR48249:SF3">
    <property type="entry name" value="MEDIATOR OF RNA POLYMERASE II TRANSCRIPTION SUBUNIT 13"/>
    <property type="match status" value="1"/>
</dbReference>
<dbReference type="Pfam" id="PF06333">
    <property type="entry name" value="Med13_C"/>
    <property type="match status" value="1"/>
</dbReference>
<dbReference type="Pfam" id="PF18296">
    <property type="entry name" value="MID_MedPIWI"/>
    <property type="match status" value="1"/>
</dbReference>
<sequence>MSYQVCFKKYVKMRQWPHVLSLRVYASYFLLYNNLPLSSAMVHDGVHLISIKTILTDQPCPNTIYYAKYQVQRKDNEDAASLLEDKEAYLRNQDCIVHAKNDLLFVYDFQAIPSIPEESSSFMLLNSGAFSRLALFQKDELALLLDLYINFLQGLKKTVLYWLCKEYNFVPIYGVLLPLKLHPSFDTQLWNIYGYPVVDLQLSVLSKGHIEFYLKPTRQTVYRLSEVDNLVKKLDTVIRLAPTGCLATLTSVHANASAQTVDALKHRYGFSLTTTSKWVGVTLESSALEFSWPLELCFLETSALRMNDDSLSSNLTDLNNLVLPSNVVNNKKELTEFANEEAEASDKRKEGFTEKEETADAVVTLVPSHSSSPVNYSINSAKSTPASIKVNEEILVADHNVSDDILMEEIDDVGITEADFDYFDLPNVEEKVEMIEPNFANTMTTLDNEEINTSISQSNTSPNLNTHENIPKQMEIQSDDRMVTEDLNPYNVEVDIPEISLNISDSKIPTSAYMPSYYSAVIFPSSISSIFQKYNYGGKYWCPSPSLSTEDLFESFSVAESVTSTDEDICSTNFIQQDFTMEYNHDFFSSSKTPTNISEQSNPDSNYDTLSLAHQVLMNESKSANFDFSFLKSLDLQPTITLGKNDLLNAILSQNLWFRSLPFWKSMTTSFMMSQDVLNFSSYMRKPIRDYLEKILLGESSAVFLSKSPENYLSSINNGHHALNDNPPSQVNFSETLVNFSQPPRVLLKYNEKKLSLDSSAPENWISLCLQPYGESKDFEVFLLSSKSPDVSSKAISFFYDVQLAYENCKLGKLNLSETSINERVMGFSTNINETDNYDDNETTQSDTATSYEQLASVCVNELSGKNVLFFYFLEDDSEKLLKACQHFICVKDSIKRLGDNKFEDKSLRICTIPNSIFDSPNSHTTNSNSFFTKVSLDIYNNDPLLMDGSLKRREPAFLLKKPLLSTLNYQLKDINPRSSALGEYALHVTYTTVEEHLLICNWNDSYGEFETERRYFLQDLEIEDALQQILEVTFTFLNSMHMDWIVIVMKIGEMSDAEYLFWDQAIIPENLQGNVSLTVGYCSAEHGPGSTSKVFSRIPYSASSTVIRNNSSHELSLVAFIREMAMPVPNDEFKKISTILARGYLALDEDESYLPLLSIHLLISRNHDPYLMLNLILKHYLSMIYLQFRTYVSFSSLPLHISTVLYQKQLLQFMASDITHPVTS</sequence>
<comment type="function">
    <text evidence="2">Component of the srb8-11 complex. The srb8-11 complex is a regulatory module of the Mediator complex which is itself involved in regulation of basal and activated RNA polymerase II-dependent transcription. The srb8-11 complex may be involved in the transcriptional repression of a subset of genes regulated by Mediator. It may inhibit the association of the Mediator complex with RNA polymerase II to form the holoenzyme complex.</text>
</comment>
<comment type="subunit">
    <text evidence="1">Component of the srb8-11 complex which consists of rb8, srb9(TRAP240), srb10 and srb11. The srb8-11 complex associates with the Mediator complex thereby blocking association with RNA polymerase II and leading to reduced transcriptional activation by Mediator.</text>
</comment>
<comment type="subcellular location">
    <subcellularLocation>
        <location evidence="3">Nucleus</location>
    </subcellularLocation>
</comment>
<comment type="similarity">
    <text evidence="4">Belongs to the Mediator complex subunit 13 family.</text>
</comment>
<reference key="1">
    <citation type="journal article" date="2002" name="Nature">
        <title>The genome sequence of Schizosaccharomyces pombe.</title>
        <authorList>
            <person name="Wood V."/>
            <person name="Gwilliam R."/>
            <person name="Rajandream M.A."/>
            <person name="Lyne M.H."/>
            <person name="Lyne R."/>
            <person name="Stewart A."/>
            <person name="Sgouros J.G."/>
            <person name="Peat N."/>
            <person name="Hayles J."/>
            <person name="Baker S.G."/>
            <person name="Basham D."/>
            <person name="Bowman S."/>
            <person name="Brooks K."/>
            <person name="Brown D."/>
            <person name="Brown S."/>
            <person name="Chillingworth T."/>
            <person name="Churcher C.M."/>
            <person name="Collins M."/>
            <person name="Connor R."/>
            <person name="Cronin A."/>
            <person name="Davis P."/>
            <person name="Feltwell T."/>
            <person name="Fraser A."/>
            <person name="Gentles S."/>
            <person name="Goble A."/>
            <person name="Hamlin N."/>
            <person name="Harris D.E."/>
            <person name="Hidalgo J."/>
            <person name="Hodgson G."/>
            <person name="Holroyd S."/>
            <person name="Hornsby T."/>
            <person name="Howarth S."/>
            <person name="Huckle E.J."/>
            <person name="Hunt S."/>
            <person name="Jagels K."/>
            <person name="James K.D."/>
            <person name="Jones L."/>
            <person name="Jones M."/>
            <person name="Leather S."/>
            <person name="McDonald S."/>
            <person name="McLean J."/>
            <person name="Mooney P."/>
            <person name="Moule S."/>
            <person name="Mungall K.L."/>
            <person name="Murphy L.D."/>
            <person name="Niblett D."/>
            <person name="Odell C."/>
            <person name="Oliver K."/>
            <person name="O'Neil S."/>
            <person name="Pearson D."/>
            <person name="Quail M.A."/>
            <person name="Rabbinowitsch E."/>
            <person name="Rutherford K.M."/>
            <person name="Rutter S."/>
            <person name="Saunders D."/>
            <person name="Seeger K."/>
            <person name="Sharp S."/>
            <person name="Skelton J."/>
            <person name="Simmonds M.N."/>
            <person name="Squares R."/>
            <person name="Squares S."/>
            <person name="Stevens K."/>
            <person name="Taylor K."/>
            <person name="Taylor R.G."/>
            <person name="Tivey A."/>
            <person name="Walsh S.V."/>
            <person name="Warren T."/>
            <person name="Whitehead S."/>
            <person name="Woodward J.R."/>
            <person name="Volckaert G."/>
            <person name="Aert R."/>
            <person name="Robben J."/>
            <person name="Grymonprez B."/>
            <person name="Weltjens I."/>
            <person name="Vanstreels E."/>
            <person name="Rieger M."/>
            <person name="Schaefer M."/>
            <person name="Mueller-Auer S."/>
            <person name="Gabel C."/>
            <person name="Fuchs M."/>
            <person name="Duesterhoeft A."/>
            <person name="Fritzc C."/>
            <person name="Holzer E."/>
            <person name="Moestl D."/>
            <person name="Hilbert H."/>
            <person name="Borzym K."/>
            <person name="Langer I."/>
            <person name="Beck A."/>
            <person name="Lehrach H."/>
            <person name="Reinhardt R."/>
            <person name="Pohl T.M."/>
            <person name="Eger P."/>
            <person name="Zimmermann W."/>
            <person name="Wedler H."/>
            <person name="Wambutt R."/>
            <person name="Purnelle B."/>
            <person name="Goffeau A."/>
            <person name="Cadieu E."/>
            <person name="Dreano S."/>
            <person name="Gloux S."/>
            <person name="Lelaure V."/>
            <person name="Mottier S."/>
            <person name="Galibert F."/>
            <person name="Aves S.J."/>
            <person name="Xiang Z."/>
            <person name="Hunt C."/>
            <person name="Moore K."/>
            <person name="Hurst S.M."/>
            <person name="Lucas M."/>
            <person name="Rochet M."/>
            <person name="Gaillardin C."/>
            <person name="Tallada V.A."/>
            <person name="Garzon A."/>
            <person name="Thode G."/>
            <person name="Daga R.R."/>
            <person name="Cruzado L."/>
            <person name="Jimenez J."/>
            <person name="Sanchez M."/>
            <person name="del Rey F."/>
            <person name="Benito J."/>
            <person name="Dominguez A."/>
            <person name="Revuelta J.L."/>
            <person name="Moreno S."/>
            <person name="Armstrong J."/>
            <person name="Forsburg S.L."/>
            <person name="Cerutti L."/>
            <person name="Lowe T."/>
            <person name="McCombie W.R."/>
            <person name="Paulsen I."/>
            <person name="Potashkin J."/>
            <person name="Shpakovski G.V."/>
            <person name="Ussery D."/>
            <person name="Barrell B.G."/>
            <person name="Nurse P."/>
        </authorList>
    </citation>
    <scope>NUCLEOTIDE SEQUENCE [LARGE SCALE GENOMIC DNA]</scope>
    <source>
        <strain>972 / ATCC 24843</strain>
    </source>
</reference>
<reference key="2">
    <citation type="journal article" date="2003" name="Proc. Natl. Acad. Sci. U.S.A.">
        <title>TRAP230/ARC240 and TRAP240/ARC250 Mediator subunits are functionally conserved through evolution.</title>
        <authorList>
            <person name="Samuelsen C.O."/>
            <person name="Baraznenok V."/>
            <person name="Khorosjutina O."/>
            <person name="Spaehr H."/>
            <person name="Kieselbach T."/>
            <person name="Holmberg S."/>
            <person name="Gustafsson C.M."/>
        </authorList>
    </citation>
    <scope>IDENTIFICATION IN MEDIATOR COMPLEX</scope>
</reference>
<reference key="3">
    <citation type="journal article" date="2003" name="J. Biol. Chem.">
        <title>Mediator influences Schizosaccharomyces pombe RNA polymerase II-dependent transcription in vitro.</title>
        <authorList>
            <person name="Spaehr H."/>
            <person name="Khorosjutina O."/>
            <person name="Baraznenok V."/>
            <person name="Linder T."/>
            <person name="Samuelsen C.O."/>
            <person name="Hermand D."/>
            <person name="Maekelae T.P."/>
            <person name="Holmberg S."/>
            <person name="Gustafsson C.M."/>
        </authorList>
    </citation>
    <scope>FUNCTION</scope>
</reference>
<reference key="4">
    <citation type="journal article" date="2006" name="Mol. Cell">
        <title>Genome-wide occupancy profile of mediator and the Srb8-11 module reveals interactions with coding regions.</title>
        <authorList>
            <person name="Zhu X."/>
            <person name="Wiren M."/>
            <person name="Sinha I."/>
            <person name="Rasmussen N.N."/>
            <person name="Linder T."/>
            <person name="Holmberg S."/>
            <person name="Ekwall K."/>
            <person name="Gustafsson C.M."/>
        </authorList>
    </citation>
    <scope>SUBCELLULAR LOCATION</scope>
</reference>
<evidence type="ECO:0000269" key="1">
    <source>
    </source>
</evidence>
<evidence type="ECO:0000269" key="2">
    <source>
    </source>
</evidence>
<evidence type="ECO:0000269" key="3">
    <source>
    </source>
</evidence>
<evidence type="ECO:0000305" key="4"/>
<proteinExistence type="evidence at protein level"/>
<protein>
    <recommendedName>
        <fullName>Mediator of RNA polymerase II transcription subunit 13</fullName>
    </recommendedName>
    <alternativeName>
        <fullName>Mediator complex subunit 13</fullName>
    </alternativeName>
    <alternativeName>
        <fullName>Suppressor of RNA polymerase B srb9</fullName>
    </alternativeName>
</protein>
<feature type="chain" id="PRO_0000072184" description="Mediator of RNA polymerase II transcription subunit 13">
    <location>
        <begin position="1"/>
        <end position="1225"/>
    </location>
</feature>
<name>SSN2_SCHPO</name>
<accession>Q9HE02</accession>
<gene>
    <name type="primary">srb9</name>
    <name type="synonym">med13</name>
    <name type="synonym">trap240</name>
    <name type="ORF">SPAC589.02c</name>
</gene>
<keyword id="KW-0010">Activator</keyword>
<keyword id="KW-0539">Nucleus</keyword>
<keyword id="KW-1185">Reference proteome</keyword>
<keyword id="KW-0678">Repressor</keyword>
<keyword id="KW-0804">Transcription</keyword>
<keyword id="KW-0805">Transcription regulation</keyword>